<feature type="chain" id="PRO_0000299185" description="Alcohol dehydrogenase-like 3">
    <location>
        <begin position="1"/>
        <end position="394"/>
    </location>
</feature>
<feature type="binding site" evidence="2">
    <location>
        <position position="48"/>
    </location>
    <ligand>
        <name>Zn(2+)</name>
        <dbReference type="ChEBI" id="CHEBI:29105"/>
        <label>1</label>
        <note>catalytic</note>
    </ligand>
</feature>
<feature type="binding site" evidence="2">
    <location>
        <position position="50"/>
    </location>
    <ligand>
        <name>an alcohol</name>
        <dbReference type="ChEBI" id="CHEBI:30879"/>
    </ligand>
</feature>
<feature type="binding site" evidence="2">
    <location>
        <position position="50"/>
    </location>
    <ligand>
        <name>NAD(+)</name>
        <dbReference type="ChEBI" id="CHEBI:57540"/>
    </ligand>
</feature>
<feature type="binding site" evidence="2">
    <location>
        <position position="50"/>
    </location>
    <ligand>
        <name>Zn(2+)</name>
        <dbReference type="ChEBI" id="CHEBI:29105"/>
        <label>1</label>
        <note>catalytic</note>
    </ligand>
</feature>
<feature type="binding site" evidence="1">
    <location>
        <position position="71"/>
    </location>
    <ligand>
        <name>an alcohol</name>
        <dbReference type="ChEBI" id="CHEBI:30879"/>
    </ligand>
</feature>
<feature type="binding site" evidence="2">
    <location>
        <position position="71"/>
    </location>
    <ligand>
        <name>Zn(2+)</name>
        <dbReference type="ChEBI" id="CHEBI:29105"/>
        <label>1</label>
        <note>catalytic</note>
    </ligand>
</feature>
<feature type="binding site" evidence="2">
    <location>
        <position position="101"/>
    </location>
    <ligand>
        <name>Zn(2+)</name>
        <dbReference type="ChEBI" id="CHEBI:29105"/>
        <label>2</label>
    </ligand>
</feature>
<feature type="binding site" evidence="2">
    <location>
        <position position="104"/>
    </location>
    <ligand>
        <name>Zn(2+)</name>
        <dbReference type="ChEBI" id="CHEBI:29105"/>
        <label>2</label>
    </ligand>
</feature>
<feature type="binding site" evidence="2">
    <location>
        <position position="107"/>
    </location>
    <ligand>
        <name>Zn(2+)</name>
        <dbReference type="ChEBI" id="CHEBI:29105"/>
        <label>2</label>
    </ligand>
</feature>
<feature type="binding site" evidence="2">
    <location>
        <position position="115"/>
    </location>
    <ligand>
        <name>Zn(2+)</name>
        <dbReference type="ChEBI" id="CHEBI:29105"/>
        <label>2</label>
    </ligand>
</feature>
<feature type="binding site" evidence="2">
    <location>
        <position position="188"/>
    </location>
    <ligand>
        <name>Zn(2+)</name>
        <dbReference type="ChEBI" id="CHEBI:29105"/>
        <label>1</label>
        <note>catalytic</note>
    </ligand>
</feature>
<feature type="binding site" evidence="2">
    <location>
        <begin position="213"/>
        <end position="218"/>
    </location>
    <ligand>
        <name>NAD(+)</name>
        <dbReference type="ChEBI" id="CHEBI:57540"/>
    </ligand>
</feature>
<feature type="binding site" evidence="2">
    <location>
        <position position="237"/>
    </location>
    <ligand>
        <name>NAD(+)</name>
        <dbReference type="ChEBI" id="CHEBI:57540"/>
    </ligand>
</feature>
<feature type="binding site" evidence="2">
    <location>
        <position position="242"/>
    </location>
    <ligand>
        <name>NAD(+)</name>
        <dbReference type="ChEBI" id="CHEBI:57540"/>
    </ligand>
</feature>
<feature type="binding site" evidence="2">
    <location>
        <position position="283"/>
    </location>
    <ligand>
        <name>NAD(+)</name>
        <dbReference type="ChEBI" id="CHEBI:57540"/>
    </ligand>
</feature>
<feature type="binding site" evidence="1">
    <location>
        <begin position="306"/>
        <end position="308"/>
    </location>
    <ligand>
        <name>NAD(+)</name>
        <dbReference type="ChEBI" id="CHEBI:57540"/>
    </ligand>
</feature>
<feature type="binding site" evidence="2">
    <location>
        <position position="306"/>
    </location>
    <ligand>
        <name>NAD(+)</name>
        <dbReference type="ChEBI" id="CHEBI:57540"/>
    </ligand>
</feature>
<feature type="binding site" evidence="2">
    <location>
        <position position="333"/>
    </location>
    <ligand>
        <name>NAD(+)</name>
        <dbReference type="ChEBI" id="CHEBI:57540"/>
    </ligand>
</feature>
<feature type="binding site" evidence="2">
    <location>
        <position position="383"/>
    </location>
    <ligand>
        <name>NAD(+)</name>
        <dbReference type="ChEBI" id="CHEBI:57540"/>
    </ligand>
</feature>
<feature type="sequence conflict" description="In Ref. 4; AAM64605." evidence="3" ref="4">
    <location>
        <position position="159"/>
    </location>
</feature>
<comment type="catalytic activity">
    <reaction evidence="2">
        <text>a primary alcohol + NAD(+) = an aldehyde + NADH + H(+)</text>
        <dbReference type="Rhea" id="RHEA:10736"/>
        <dbReference type="ChEBI" id="CHEBI:15378"/>
        <dbReference type="ChEBI" id="CHEBI:15734"/>
        <dbReference type="ChEBI" id="CHEBI:17478"/>
        <dbReference type="ChEBI" id="CHEBI:57540"/>
        <dbReference type="ChEBI" id="CHEBI:57945"/>
        <dbReference type="EC" id="1.1.1.1"/>
    </reaction>
</comment>
<comment type="catalytic activity">
    <reaction evidence="2">
        <text>a secondary alcohol + NAD(+) = a ketone + NADH + H(+)</text>
        <dbReference type="Rhea" id="RHEA:10740"/>
        <dbReference type="ChEBI" id="CHEBI:15378"/>
        <dbReference type="ChEBI" id="CHEBI:17087"/>
        <dbReference type="ChEBI" id="CHEBI:35681"/>
        <dbReference type="ChEBI" id="CHEBI:57540"/>
        <dbReference type="ChEBI" id="CHEBI:57945"/>
        <dbReference type="EC" id="1.1.1.1"/>
    </reaction>
</comment>
<comment type="cofactor">
    <cofactor evidence="2">
        <name>Zn(2+)</name>
        <dbReference type="ChEBI" id="CHEBI:29105"/>
    </cofactor>
    <text evidence="2">Binds 2 Zn(2+) ions per subunit.</text>
</comment>
<comment type="subunit">
    <text evidence="2">Homodimer.</text>
</comment>
<comment type="subcellular location">
    <subcellularLocation>
        <location evidence="2">Cytoplasm</location>
    </subcellularLocation>
</comment>
<comment type="similarity">
    <text evidence="3">Belongs to the zinc-containing alcohol dehydrogenase family. Class-III subfamily.</text>
</comment>
<comment type="sequence caution" evidence="3">
    <conflict type="erroneous gene model prediction">
        <sequence resource="EMBL-CDS" id="AAF25975"/>
    </conflict>
</comment>
<organism>
    <name type="scientific">Arabidopsis thaliana</name>
    <name type="common">Mouse-ear cress</name>
    <dbReference type="NCBI Taxonomy" id="3702"/>
    <lineage>
        <taxon>Eukaryota</taxon>
        <taxon>Viridiplantae</taxon>
        <taxon>Streptophyta</taxon>
        <taxon>Embryophyta</taxon>
        <taxon>Tracheophyta</taxon>
        <taxon>Spermatophyta</taxon>
        <taxon>Magnoliopsida</taxon>
        <taxon>eudicotyledons</taxon>
        <taxon>Gunneridae</taxon>
        <taxon>Pentapetalae</taxon>
        <taxon>rosids</taxon>
        <taxon>malvids</taxon>
        <taxon>Brassicales</taxon>
        <taxon>Brassicaceae</taxon>
        <taxon>Camelineae</taxon>
        <taxon>Arabidopsis</taxon>
    </lineage>
</organism>
<reference key="1">
    <citation type="journal article" date="2000" name="Nature">
        <title>Sequence and analysis of chromosome 1 of the plant Arabidopsis thaliana.</title>
        <authorList>
            <person name="Theologis A."/>
            <person name="Ecker J.R."/>
            <person name="Palm C.J."/>
            <person name="Federspiel N.A."/>
            <person name="Kaul S."/>
            <person name="White O."/>
            <person name="Alonso J."/>
            <person name="Altafi H."/>
            <person name="Araujo R."/>
            <person name="Bowman C.L."/>
            <person name="Brooks S.Y."/>
            <person name="Buehler E."/>
            <person name="Chan A."/>
            <person name="Chao Q."/>
            <person name="Chen H."/>
            <person name="Cheuk R.F."/>
            <person name="Chin C.W."/>
            <person name="Chung M.K."/>
            <person name="Conn L."/>
            <person name="Conway A.B."/>
            <person name="Conway A.R."/>
            <person name="Creasy T.H."/>
            <person name="Dewar K."/>
            <person name="Dunn P."/>
            <person name="Etgu P."/>
            <person name="Feldblyum T.V."/>
            <person name="Feng J.-D."/>
            <person name="Fong B."/>
            <person name="Fujii C.Y."/>
            <person name="Gill J.E."/>
            <person name="Goldsmith A.D."/>
            <person name="Haas B."/>
            <person name="Hansen N.F."/>
            <person name="Hughes B."/>
            <person name="Huizar L."/>
            <person name="Hunter J.L."/>
            <person name="Jenkins J."/>
            <person name="Johnson-Hopson C."/>
            <person name="Khan S."/>
            <person name="Khaykin E."/>
            <person name="Kim C.J."/>
            <person name="Koo H.L."/>
            <person name="Kremenetskaia I."/>
            <person name="Kurtz D.B."/>
            <person name="Kwan A."/>
            <person name="Lam B."/>
            <person name="Langin-Hooper S."/>
            <person name="Lee A."/>
            <person name="Lee J.M."/>
            <person name="Lenz C.A."/>
            <person name="Li J.H."/>
            <person name="Li Y.-P."/>
            <person name="Lin X."/>
            <person name="Liu S.X."/>
            <person name="Liu Z.A."/>
            <person name="Luros J.S."/>
            <person name="Maiti R."/>
            <person name="Marziali A."/>
            <person name="Militscher J."/>
            <person name="Miranda M."/>
            <person name="Nguyen M."/>
            <person name="Nierman W.C."/>
            <person name="Osborne B.I."/>
            <person name="Pai G."/>
            <person name="Peterson J."/>
            <person name="Pham P.K."/>
            <person name="Rizzo M."/>
            <person name="Rooney T."/>
            <person name="Rowley D."/>
            <person name="Sakano H."/>
            <person name="Salzberg S.L."/>
            <person name="Schwartz J.R."/>
            <person name="Shinn P."/>
            <person name="Southwick A.M."/>
            <person name="Sun H."/>
            <person name="Tallon L.J."/>
            <person name="Tambunga G."/>
            <person name="Toriumi M.J."/>
            <person name="Town C.D."/>
            <person name="Utterback T."/>
            <person name="Van Aken S."/>
            <person name="Vaysberg M."/>
            <person name="Vysotskaia V.S."/>
            <person name="Walker M."/>
            <person name="Wu D."/>
            <person name="Yu G."/>
            <person name="Fraser C.M."/>
            <person name="Venter J.C."/>
            <person name="Davis R.W."/>
        </authorList>
    </citation>
    <scope>NUCLEOTIDE SEQUENCE [LARGE SCALE GENOMIC DNA]</scope>
    <source>
        <strain>cv. Columbia</strain>
    </source>
</reference>
<reference key="2">
    <citation type="journal article" date="2017" name="Plant J.">
        <title>Araport11: a complete reannotation of the Arabidopsis thaliana reference genome.</title>
        <authorList>
            <person name="Cheng C.Y."/>
            <person name="Krishnakumar V."/>
            <person name="Chan A.P."/>
            <person name="Thibaud-Nissen F."/>
            <person name="Schobel S."/>
            <person name="Town C.D."/>
        </authorList>
    </citation>
    <scope>GENOME REANNOTATION</scope>
    <source>
        <strain>cv. Columbia</strain>
    </source>
</reference>
<reference key="3">
    <citation type="submission" date="2006-12" db="EMBL/GenBank/DDBJ databases">
        <title>Arabidopsis ORF clones.</title>
        <authorList>
            <person name="Bautista V.R."/>
            <person name="Kim C.J."/>
            <person name="Chen H."/>
            <person name="Wu S.Y."/>
            <person name="De Los Reyes C."/>
            <person name="Ecker J.R."/>
        </authorList>
    </citation>
    <scope>NUCLEOTIDE SEQUENCE [LARGE SCALE MRNA]</scope>
    <source>
        <strain>cv. Columbia</strain>
    </source>
</reference>
<reference key="4">
    <citation type="submission" date="2002-03" db="EMBL/GenBank/DDBJ databases">
        <title>Full-length cDNA from Arabidopsis thaliana.</title>
        <authorList>
            <person name="Brover V.V."/>
            <person name="Troukhan M.E."/>
            <person name="Alexandrov N.A."/>
            <person name="Lu Y.-P."/>
            <person name="Flavell R.B."/>
            <person name="Feldmann K.A."/>
        </authorList>
    </citation>
    <scope>NUCLEOTIDE SEQUENCE [LARGE SCALE MRNA]</scope>
</reference>
<dbReference type="EC" id="1.1.1.1" evidence="2"/>
<dbReference type="EMBL" id="AC017118">
    <property type="protein sequence ID" value="AAF25975.1"/>
    <property type="status" value="ALT_SEQ"/>
    <property type="molecule type" value="Genomic_DNA"/>
</dbReference>
<dbReference type="EMBL" id="CP002684">
    <property type="protein sequence ID" value="AEE31528.1"/>
    <property type="molecule type" value="Genomic_DNA"/>
</dbReference>
<dbReference type="EMBL" id="BT029769">
    <property type="protein sequence ID" value="ABM06039.1"/>
    <property type="molecule type" value="mRNA"/>
</dbReference>
<dbReference type="EMBL" id="AY087044">
    <property type="protein sequence ID" value="AAM64605.1"/>
    <property type="molecule type" value="mRNA"/>
</dbReference>
<dbReference type="RefSeq" id="NP_564409.1">
    <property type="nucleotide sequence ID" value="NM_103012.4"/>
</dbReference>
<dbReference type="SMR" id="A1L4Y2"/>
<dbReference type="FunCoup" id="A1L4Y2">
    <property type="interactions" value="168"/>
</dbReference>
<dbReference type="STRING" id="3702.A1L4Y2"/>
<dbReference type="GlyGen" id="A1L4Y2">
    <property type="glycosylation" value="1 site"/>
</dbReference>
<dbReference type="PaxDb" id="3702-AT1G32780.1"/>
<dbReference type="ProteomicsDB" id="244716"/>
<dbReference type="EnsemblPlants" id="AT1G32780.1">
    <property type="protein sequence ID" value="AT1G32780.1"/>
    <property type="gene ID" value="AT1G32780"/>
</dbReference>
<dbReference type="GeneID" id="840172"/>
<dbReference type="Gramene" id="AT1G32780.1">
    <property type="protein sequence ID" value="AT1G32780.1"/>
    <property type="gene ID" value="AT1G32780"/>
</dbReference>
<dbReference type="KEGG" id="ath:AT1G32780"/>
<dbReference type="Araport" id="AT1G32780"/>
<dbReference type="TAIR" id="AT1G32780"/>
<dbReference type="eggNOG" id="KOG0022">
    <property type="taxonomic scope" value="Eukaryota"/>
</dbReference>
<dbReference type="HOGENOM" id="CLU_026673_14_0_1"/>
<dbReference type="InParanoid" id="A1L4Y2"/>
<dbReference type="OMA" id="DPFKSVM"/>
<dbReference type="PhylomeDB" id="A1L4Y2"/>
<dbReference type="BioCyc" id="ARA:AT1G32780-MONOMER"/>
<dbReference type="PRO" id="PR:A1L4Y2"/>
<dbReference type="Proteomes" id="UP000006548">
    <property type="component" value="Chromosome 1"/>
</dbReference>
<dbReference type="ExpressionAtlas" id="A1L4Y2">
    <property type="expression patterns" value="baseline and differential"/>
</dbReference>
<dbReference type="GO" id="GO:0005737">
    <property type="term" value="C:cytoplasm"/>
    <property type="evidence" value="ECO:0007669"/>
    <property type="project" value="UniProtKB-SubCell"/>
</dbReference>
<dbReference type="GO" id="GO:0004022">
    <property type="term" value="F:alcohol dehydrogenase (NAD+) activity"/>
    <property type="evidence" value="ECO:0007669"/>
    <property type="project" value="UniProtKB-EC"/>
</dbReference>
<dbReference type="GO" id="GO:0008270">
    <property type="term" value="F:zinc ion binding"/>
    <property type="evidence" value="ECO:0007669"/>
    <property type="project" value="InterPro"/>
</dbReference>
<dbReference type="CDD" id="cd08301">
    <property type="entry name" value="alcohol_DH_plants"/>
    <property type="match status" value="1"/>
</dbReference>
<dbReference type="FunFam" id="3.90.180.10:FF:000007">
    <property type="entry name" value="Alcohol dehydrogenase 6"/>
    <property type="match status" value="1"/>
</dbReference>
<dbReference type="FunFam" id="3.40.50.720:FF:000003">
    <property type="entry name" value="S-(hydroxymethyl)glutathione dehydrogenase"/>
    <property type="match status" value="1"/>
</dbReference>
<dbReference type="Gene3D" id="3.90.180.10">
    <property type="entry name" value="Medium-chain alcohol dehydrogenases, catalytic domain"/>
    <property type="match status" value="1"/>
</dbReference>
<dbReference type="Gene3D" id="3.40.50.720">
    <property type="entry name" value="NAD(P)-binding Rossmann-like Domain"/>
    <property type="match status" value="1"/>
</dbReference>
<dbReference type="InterPro" id="IPR013149">
    <property type="entry name" value="ADH-like_C"/>
</dbReference>
<dbReference type="InterPro" id="IPR013154">
    <property type="entry name" value="ADH-like_N"/>
</dbReference>
<dbReference type="InterPro" id="IPR002328">
    <property type="entry name" value="ADH_Zn_CS"/>
</dbReference>
<dbReference type="InterPro" id="IPR011032">
    <property type="entry name" value="GroES-like_sf"/>
</dbReference>
<dbReference type="InterPro" id="IPR036291">
    <property type="entry name" value="NAD(P)-bd_dom_sf"/>
</dbReference>
<dbReference type="PANTHER" id="PTHR43880">
    <property type="entry name" value="ALCOHOL DEHYDROGENASE"/>
    <property type="match status" value="1"/>
</dbReference>
<dbReference type="PANTHER" id="PTHR43880:SF39">
    <property type="entry name" value="ALCOHOL DEHYDROGENASE-LIKE 3"/>
    <property type="match status" value="1"/>
</dbReference>
<dbReference type="Pfam" id="PF08240">
    <property type="entry name" value="ADH_N"/>
    <property type="match status" value="1"/>
</dbReference>
<dbReference type="Pfam" id="PF00107">
    <property type="entry name" value="ADH_zinc_N"/>
    <property type="match status" value="1"/>
</dbReference>
<dbReference type="SUPFAM" id="SSF50129">
    <property type="entry name" value="GroES-like"/>
    <property type="match status" value="2"/>
</dbReference>
<dbReference type="SUPFAM" id="SSF51735">
    <property type="entry name" value="NAD(P)-binding Rossmann-fold domains"/>
    <property type="match status" value="1"/>
</dbReference>
<dbReference type="PROSITE" id="PS00059">
    <property type="entry name" value="ADH_ZINC"/>
    <property type="match status" value="1"/>
</dbReference>
<sequence length="394" mass="42908">MAETQGKVITCKAAVVWGPKVPLVIQEICVDPPQKMEVRVKILYSSICHTDLGCWNGTNEAERAFPRILGHEAVGIVESVGEGVKDVKEGDYVIPTFNGECGECKVCKREESNLCERYHVDPMKRVMVNDGGTRFSTTINKDGGSSQSQPIYHFLNTSTFTEYTVLDSACVVKIDPNSPLKQMSLLSCGVSTGVGAAWNIANVKEGKSTAVFGLGSVGLAVAEGARARGASRIIGVDANASKFEKGKLMGVTDFINPKDLTKPVHQMIREITGGGVDYSFECTGNVDVLREAFLSTHVGWGSTVLVGIYPTPRTLPLHPMELFDGRRITGSVFGGFKPKSQLPNFAQQCMKGVVKLEPFITNELPFEKINDAFQLLRDGKSLRCILQISKLLKR</sequence>
<evidence type="ECO:0000250" key="1">
    <source>
        <dbReference type="UniProtKB" id="P00327"/>
    </source>
</evidence>
<evidence type="ECO:0000250" key="2">
    <source>
        <dbReference type="UniProtKB" id="P06525"/>
    </source>
</evidence>
<evidence type="ECO:0000305" key="3"/>
<keyword id="KW-0963">Cytoplasm</keyword>
<keyword id="KW-0479">Metal-binding</keyword>
<keyword id="KW-0520">NAD</keyword>
<keyword id="KW-0560">Oxidoreductase</keyword>
<keyword id="KW-1185">Reference proteome</keyword>
<keyword id="KW-0862">Zinc</keyword>
<protein>
    <recommendedName>
        <fullName>Alcohol dehydrogenase-like 3</fullName>
        <ecNumber evidence="2">1.1.1.1</ecNumber>
    </recommendedName>
</protein>
<name>ADHL3_ARATH</name>
<gene>
    <name type="ordered locus">At1g32780</name>
    <name type="ORF">F6N18.16</name>
</gene>
<accession>A1L4Y2</accession>
<accession>Q8LBR3</accession>
<accession>Q9LPI6</accession>
<proteinExistence type="evidence at transcript level"/>